<accession>P05094</accession>
<accession>Q99001</accession>
<sequence>MDHHYDPQQTNDYMQPEEDWDRDLLLDPAWEKQQRKTFTAWCNSHLRKAGTQIENIEEDFRDGLKLMLLLEVISGERLAKPERGKMRVHKISNVNKALDFIASKGVKLVSIGAEEIVDGNVKMTLGMIWTIILRFAIQDISVEETSAKEGLLLWCQRKTAPYKNVNIQNFHISWKDGLGFCALIHRHRPELIDYGKLRKDDPLTNLNTAFDVAEKYLDIPKMLDAEDIVGTARPDEKAIMTYVSSFYHAFSGAQKAETAANRICKVLAVNQENEQLMEDYEKLASDLLEWIRRTIPWLENRAPENTMQAMQQKLEDFRDYRRLHKPPKVQEKCQLEINFNTLQTKLRLSNRPAFMPSEGKMVSDINNAWGGLEQAEKGYEEWLLNEIRRLERLDHLAEKFRQKASIHESWTDGKEAMLQQKDYETATLSEIKALLKKHEAFESDLAAHQDRVEQIAAIAQELNELDYYDSPSVNARCQKICDQWDNLGALTQKRREALERTEKLLETIDQLYLEYAKRAAPFNNWMEGAMEDLQDTFIVHTIEEIQGLTTAHEQFKATLPDADKERQAILGIHNEVSKIVQTYHVNMAGTNPYTTITPQEINGKWEHVRQLVPRRDQALMEEHARQQQNERLRKQFGAQANVIGPWIQTKMEEIGRISIEMHGTLEDQLNHLRQYEKSIVNYKPKIDQLEGDHQQIQEALIFDNKHTNYTMEHIRVGWEQLLTTIARTINEVENQILTRDAKGISQEQMNEFRASFNHFDRDHSGTLGPEEFKACLISLGYDIGNDAQGEAEFARIMSIVDPNRMGVVTFQAFIDFMSRETADTDTADQVMASFKILAGDKNYITVDELRRELPPDQAEYCIARMAPYNGRDAVPGALDYMSFSTALYGESDL</sequence>
<name>ACTN1_CHICK</name>
<proteinExistence type="evidence at protein level"/>
<keyword id="KW-0002">3D-structure</keyword>
<keyword id="KW-0009">Actin-binding</keyword>
<keyword id="KW-0025">Alternative splicing</keyword>
<keyword id="KW-0106">Calcium</keyword>
<keyword id="KW-0965">Cell junction</keyword>
<keyword id="KW-1003">Cell membrane</keyword>
<keyword id="KW-0966">Cell projection</keyword>
<keyword id="KW-0963">Cytoplasm</keyword>
<keyword id="KW-0206">Cytoskeleton</keyword>
<keyword id="KW-0472">Membrane</keyword>
<keyword id="KW-0479">Metal-binding</keyword>
<keyword id="KW-0597">Phosphoprotein</keyword>
<keyword id="KW-1185">Reference proteome</keyword>
<keyword id="KW-0677">Repeat</keyword>
<evidence type="ECO:0000250" key="1"/>
<evidence type="ECO:0000250" key="2">
    <source>
        <dbReference type="UniProtKB" id="P12814"/>
    </source>
</evidence>
<evidence type="ECO:0000250" key="3">
    <source>
        <dbReference type="UniProtKB" id="Q7TPR4"/>
    </source>
</evidence>
<evidence type="ECO:0000250" key="4">
    <source>
        <dbReference type="UniProtKB" id="Q9Z1P2"/>
    </source>
</evidence>
<evidence type="ECO:0000255" key="5">
    <source>
        <dbReference type="PROSITE-ProRule" id="PRU00044"/>
    </source>
</evidence>
<evidence type="ECO:0000255" key="6">
    <source>
        <dbReference type="PROSITE-ProRule" id="PRU00448"/>
    </source>
</evidence>
<evidence type="ECO:0000269" key="7">
    <source>
    </source>
</evidence>
<evidence type="ECO:0000303" key="8">
    <source>
    </source>
</evidence>
<evidence type="ECO:0000305" key="9"/>
<feature type="chain" id="PRO_0000073434" description="Alpha-actinin-1">
    <location>
        <begin position="1"/>
        <end position="893"/>
    </location>
</feature>
<feature type="domain" description="Calponin-homology (CH) 1" evidence="5">
    <location>
        <begin position="32"/>
        <end position="136"/>
    </location>
</feature>
<feature type="domain" description="Calponin-homology (CH) 2" evidence="5">
    <location>
        <begin position="145"/>
        <end position="251"/>
    </location>
</feature>
<feature type="repeat" description="Spectrin 1">
    <location>
        <begin position="275"/>
        <end position="385"/>
    </location>
</feature>
<feature type="repeat" description="Spectrin 2">
    <location>
        <begin position="395"/>
        <end position="500"/>
    </location>
</feature>
<feature type="repeat" description="Spectrin 3">
    <location>
        <begin position="510"/>
        <end position="621"/>
    </location>
</feature>
<feature type="repeat" description="Spectrin 4">
    <location>
        <begin position="631"/>
        <end position="734"/>
    </location>
</feature>
<feature type="domain" description="EF-hand 1" evidence="6">
    <location>
        <begin position="747"/>
        <end position="782"/>
    </location>
</feature>
<feature type="domain" description="EF-hand 2" evidence="6">
    <location>
        <begin position="788"/>
        <end position="823"/>
    </location>
</feature>
<feature type="region of interest" description="Actin-binding">
    <location>
        <begin position="1"/>
        <end position="248"/>
    </location>
</feature>
<feature type="binding site" evidence="6">
    <location>
        <position position="760"/>
    </location>
    <ligand>
        <name>Ca(2+)</name>
        <dbReference type="ChEBI" id="CHEBI:29108"/>
    </ligand>
</feature>
<feature type="binding site" evidence="6">
    <location>
        <position position="762"/>
    </location>
    <ligand>
        <name>Ca(2+)</name>
        <dbReference type="ChEBI" id="CHEBI:29108"/>
    </ligand>
</feature>
<feature type="binding site" evidence="6">
    <location>
        <position position="764"/>
    </location>
    <ligand>
        <name>Ca(2+)</name>
        <dbReference type="ChEBI" id="CHEBI:29108"/>
    </ligand>
</feature>
<feature type="binding site" evidence="6">
    <location>
        <position position="766"/>
    </location>
    <ligand>
        <name>Ca(2+)</name>
        <dbReference type="ChEBI" id="CHEBI:29108"/>
    </ligand>
</feature>
<feature type="binding site" evidence="6">
    <location>
        <position position="771"/>
    </location>
    <ligand>
        <name>Ca(2+)</name>
        <dbReference type="ChEBI" id="CHEBI:29108"/>
    </ligand>
</feature>
<feature type="modified residue" description="Phosphotyrosine; by FAK1" evidence="1">
    <location>
        <position position="13"/>
    </location>
</feature>
<feature type="splice variant" id="VSP_000710" description="In isoform 2." evidence="8">
    <original>DHSGTLGPEEFK</original>
    <variation>KKTGMMDCEDFR</variation>
    <location>
        <begin position="762"/>
        <end position="773"/>
    </location>
</feature>
<feature type="splice variant" id="VSP_000711" description="In isoform 2." evidence="8">
    <original>LGYDIGNDAQ</original>
    <variation>MGYNM</variation>
    <location>
        <begin position="779"/>
        <end position="788"/>
    </location>
</feature>
<feature type="sequence conflict" description="In Ref. 2; AAA48567." evidence="9" ref="2">
    <original>C</original>
    <variation>Y</variation>
    <location>
        <position position="155"/>
    </location>
</feature>
<feature type="sequence conflict" description="In Ref. 1; AAA48570." evidence="9" ref="1">
    <original>T</original>
    <variation>S</variation>
    <location>
        <position position="501"/>
    </location>
</feature>
<feature type="sequence conflict" description="In Ref. 3; CAA32079." evidence="9" ref="3">
    <original>EL</original>
    <variation>DV</variation>
    <location>
        <begin position="852"/>
        <end position="853"/>
    </location>
</feature>
<gene>
    <name type="primary">ACTN1</name>
</gene>
<reference key="1">
    <citation type="journal article" date="1987" name="J. Biol. Chem.">
        <title>The sequence of chick alpha-actinin reveals homologies to spectrin and calmodulin.</title>
        <authorList>
            <person name="Baron M.D."/>
            <person name="Davison M.D."/>
            <person name="Jones P."/>
            <person name="Critchley D.R."/>
        </authorList>
    </citation>
    <scope>NUCLEOTIDE SEQUENCE [MRNA] (ISOFORM 1)</scope>
</reference>
<reference key="2">
    <citation type="journal article" date="1992" name="J. Biol. Chem.">
        <title>Mutually exclusive splicing of calcium-binding domain exons in chick alpha-actinin.</title>
        <authorList>
            <person name="Waites G.T."/>
            <person name="Graham I.R."/>
            <person name="Jackson P."/>
            <person name="Millake D.B."/>
            <person name="Patel B."/>
            <person name="Blanchard A.D."/>
            <person name="Weller P."/>
            <person name="Eperon I.C."/>
            <person name="Critchley D.R."/>
        </authorList>
    </citation>
    <scope>NUCLEOTIDE SEQUENCE [MRNA] (ISOFORM 2)</scope>
    <source>
        <tissue>Brain</tissue>
    </source>
</reference>
<reference key="3">
    <citation type="journal article" date="1988" name="Eur. J. Biochem.">
        <title>Primary structure of chicken skeletal muscle and fibroblast alpha-actinins deduced from cDNA sequences.</title>
        <authorList>
            <person name="Arimura C."/>
            <person name="Suzuki T."/>
            <person name="Yanagisawa M."/>
            <person name="Imamura M."/>
            <person name="Hamada Y."/>
            <person name="Masaki T."/>
        </authorList>
    </citation>
    <scope>NUCLEOTIDE SEQUENCE [MRNA] OF 38-893 (ISOFORM 1)</scope>
    <source>
        <tissue>Fibroblast</tissue>
    </source>
</reference>
<reference key="4">
    <citation type="journal article" date="1987" name="J. Biol. Chem.">
        <title>Isolation and characterization of a cDNA encoding a chick alpha-actinin.</title>
        <authorList>
            <person name="Baron M.D."/>
            <person name="Davison M.D."/>
            <person name="Jones P."/>
            <person name="Patel B."/>
            <person name="Critchley D.R."/>
        </authorList>
    </citation>
    <scope>NUCLEOTIDE SEQUENCE [MRNA] OF 62-769 (ISOFORM 1)</scope>
    <source>
        <tissue>Fibroblast</tissue>
    </source>
</reference>
<reference key="5">
    <citation type="journal article" date="2004" name="Exp. Cell Res.">
        <title>The PDZ-LIM protein RIL modulates actin stress fiber turnover and enhances the association of alpha-actinin with F-actin.</title>
        <authorList>
            <person name="Vallenius T."/>
            <person name="Scharm B."/>
            <person name="Vesikansa A."/>
            <person name="Luukko K."/>
            <person name="Schaefer R."/>
            <person name="Maekelae T.P."/>
        </authorList>
    </citation>
    <scope>INTERACTION WITH PDLIM4</scope>
</reference>
<dbReference type="EMBL" id="M74143">
    <property type="protein sequence ID" value="AAA48570.1"/>
    <property type="molecule type" value="mRNA"/>
</dbReference>
<dbReference type="EMBL" id="X13875">
    <property type="protein sequence ID" value="CAA32079.1"/>
    <property type="molecule type" value="mRNA"/>
</dbReference>
<dbReference type="EMBL" id="J02666">
    <property type="protein sequence ID" value="AAA48566.1"/>
    <property type="molecule type" value="mRNA"/>
</dbReference>
<dbReference type="EMBL" id="J03486">
    <property type="protein sequence ID" value="AAA48567.1"/>
    <property type="molecule type" value="mRNA"/>
</dbReference>
<dbReference type="PIR" id="A42162">
    <property type="entry name" value="A42162"/>
</dbReference>
<dbReference type="RefSeq" id="NP_989458.2">
    <molecule id="P05094-2"/>
    <property type="nucleotide sequence ID" value="NM_204127.2"/>
</dbReference>
<dbReference type="RefSeq" id="XP_015142744.1">
    <molecule id="P05094-1"/>
    <property type="nucleotide sequence ID" value="XM_015287258.4"/>
</dbReference>
<dbReference type="RefSeq" id="XP_046773557.1">
    <molecule id="P05094-1"/>
    <property type="nucleotide sequence ID" value="XM_046917601.1"/>
</dbReference>
<dbReference type="PDB" id="1SJJ">
    <property type="method" value="EM"/>
    <property type="resolution" value="20.00 A"/>
    <property type="chains" value="A/B=26-893"/>
</dbReference>
<dbReference type="PDBsum" id="1SJJ"/>
<dbReference type="SMR" id="P05094"/>
<dbReference type="BioGRID" id="674968">
    <property type="interactions" value="1"/>
</dbReference>
<dbReference type="FunCoup" id="P05094">
    <property type="interactions" value="2069"/>
</dbReference>
<dbReference type="IntAct" id="P05094">
    <property type="interactions" value="7"/>
</dbReference>
<dbReference type="STRING" id="9031.ENSGALP00000049448"/>
<dbReference type="PaxDb" id="9031-ENSGALP00000031979"/>
<dbReference type="Ensembl" id="ENSGALT00010049325.1">
    <molecule id="P05094-1"/>
    <property type="protein sequence ID" value="ENSGALP00010029162.1"/>
    <property type="gene ID" value="ENSGALG00010020389.1"/>
</dbReference>
<dbReference type="GeneID" id="373918"/>
<dbReference type="KEGG" id="gga:373918"/>
<dbReference type="CTD" id="87"/>
<dbReference type="VEuPathDB" id="HostDB:geneid_373918"/>
<dbReference type="eggNOG" id="KOG0035">
    <property type="taxonomic scope" value="Eukaryota"/>
</dbReference>
<dbReference type="GeneTree" id="ENSGT00940000155548"/>
<dbReference type="InParanoid" id="P05094"/>
<dbReference type="OrthoDB" id="10017054at2759"/>
<dbReference type="PhylomeDB" id="P05094"/>
<dbReference type="TreeFam" id="TF352676"/>
<dbReference type="Reactome" id="R-GGA-114608">
    <property type="pathway name" value="Platelet degranulation"/>
</dbReference>
<dbReference type="Reactome" id="R-GGA-446388">
    <property type="pathway name" value="Regulation of cytoskeletal remodeling and cell spreading by IPP complex components"/>
</dbReference>
<dbReference type="Reactome" id="R-GGA-9013405">
    <property type="pathway name" value="RHOD GTPase cycle"/>
</dbReference>
<dbReference type="Reactome" id="R-GGA-9013418">
    <property type="pathway name" value="RHOBTB2 GTPase cycle"/>
</dbReference>
<dbReference type="Reactome" id="R-GGA-9035034">
    <property type="pathway name" value="RHOF GTPase cycle"/>
</dbReference>
<dbReference type="SABIO-RK" id="P05094"/>
<dbReference type="EvolutionaryTrace" id="P05094"/>
<dbReference type="PRO" id="PR:P05094"/>
<dbReference type="Proteomes" id="UP000000539">
    <property type="component" value="Chromosome 5"/>
</dbReference>
<dbReference type="Bgee" id="ENSGALG00000042458">
    <property type="expression patterns" value="Expressed in colon and 14 other cell types or tissues"/>
</dbReference>
<dbReference type="GO" id="GO:0005923">
    <property type="term" value="C:bicellular tight junction"/>
    <property type="evidence" value="ECO:0000314"/>
    <property type="project" value="AgBase"/>
</dbReference>
<dbReference type="GO" id="GO:0030054">
    <property type="term" value="C:cell junction"/>
    <property type="evidence" value="ECO:0000318"/>
    <property type="project" value="GO_Central"/>
</dbReference>
<dbReference type="GO" id="GO:0031252">
    <property type="term" value="C:cell leading edge"/>
    <property type="evidence" value="ECO:0000314"/>
    <property type="project" value="AgBase"/>
</dbReference>
<dbReference type="GO" id="GO:0042995">
    <property type="term" value="C:cell projection"/>
    <property type="evidence" value="ECO:0000318"/>
    <property type="project" value="GO_Central"/>
</dbReference>
<dbReference type="GO" id="GO:0030864">
    <property type="term" value="C:cortical actin cytoskeleton"/>
    <property type="evidence" value="ECO:0000318"/>
    <property type="project" value="GO_Central"/>
</dbReference>
<dbReference type="GO" id="GO:0097433">
    <property type="term" value="C:dense body"/>
    <property type="evidence" value="ECO:0000314"/>
    <property type="project" value="AgBase"/>
</dbReference>
<dbReference type="GO" id="GO:0005925">
    <property type="term" value="C:focal adhesion"/>
    <property type="evidence" value="ECO:0000314"/>
    <property type="project" value="AgBase"/>
</dbReference>
<dbReference type="GO" id="GO:0090637">
    <property type="term" value="C:inner dense plaque of desmosome"/>
    <property type="evidence" value="ECO:0000314"/>
    <property type="project" value="AgBase"/>
</dbReference>
<dbReference type="GO" id="GO:0030027">
    <property type="term" value="C:lamellipodium"/>
    <property type="evidence" value="ECO:0000314"/>
    <property type="project" value="AgBase"/>
</dbReference>
<dbReference type="GO" id="GO:0016328">
    <property type="term" value="C:lateral plasma membrane"/>
    <property type="evidence" value="ECO:0000314"/>
    <property type="project" value="AgBase"/>
</dbReference>
<dbReference type="GO" id="GO:0090636">
    <property type="term" value="C:outer dense plaque of desmosome"/>
    <property type="evidence" value="ECO:0000314"/>
    <property type="project" value="AgBase"/>
</dbReference>
<dbReference type="GO" id="GO:0005886">
    <property type="term" value="C:plasma membrane"/>
    <property type="evidence" value="ECO:0000318"/>
    <property type="project" value="GO_Central"/>
</dbReference>
<dbReference type="GO" id="GO:0001726">
    <property type="term" value="C:ruffle"/>
    <property type="evidence" value="ECO:0007669"/>
    <property type="project" value="UniProtKB-SubCell"/>
</dbReference>
<dbReference type="GO" id="GO:0042383">
    <property type="term" value="C:sarcolemma"/>
    <property type="evidence" value="ECO:0000315"/>
    <property type="project" value="AgBase"/>
</dbReference>
<dbReference type="GO" id="GO:0030486">
    <property type="term" value="C:smooth muscle dense body"/>
    <property type="evidence" value="ECO:0000314"/>
    <property type="project" value="AgBase"/>
</dbReference>
<dbReference type="GO" id="GO:0001725">
    <property type="term" value="C:stress fiber"/>
    <property type="evidence" value="ECO:0000314"/>
    <property type="project" value="AgBase"/>
</dbReference>
<dbReference type="GO" id="GO:1990357">
    <property type="term" value="C:terminal web"/>
    <property type="evidence" value="ECO:0000314"/>
    <property type="project" value="AgBase"/>
</dbReference>
<dbReference type="GO" id="GO:0030018">
    <property type="term" value="C:Z disc"/>
    <property type="evidence" value="ECO:0000318"/>
    <property type="project" value="GO_Central"/>
</dbReference>
<dbReference type="GO" id="GO:0005915">
    <property type="term" value="C:zonula adherens"/>
    <property type="evidence" value="ECO:0000314"/>
    <property type="project" value="AgBase"/>
</dbReference>
<dbReference type="GO" id="GO:0051015">
    <property type="term" value="F:actin filament binding"/>
    <property type="evidence" value="ECO:0000318"/>
    <property type="project" value="GO_Central"/>
</dbReference>
<dbReference type="GO" id="GO:0051393">
    <property type="term" value="F:alpha-actinin binding"/>
    <property type="evidence" value="ECO:0000314"/>
    <property type="project" value="AgBase"/>
</dbReference>
<dbReference type="GO" id="GO:0005509">
    <property type="term" value="F:calcium ion binding"/>
    <property type="evidence" value="ECO:0007669"/>
    <property type="project" value="InterPro"/>
</dbReference>
<dbReference type="GO" id="GO:0030274">
    <property type="term" value="F:LIM domain binding"/>
    <property type="evidence" value="ECO:0000353"/>
    <property type="project" value="AgBase"/>
</dbReference>
<dbReference type="GO" id="GO:0051219">
    <property type="term" value="F:phosphoprotein binding"/>
    <property type="evidence" value="ECO:0000353"/>
    <property type="project" value="AgBase"/>
</dbReference>
<dbReference type="GO" id="GO:0042803">
    <property type="term" value="F:protein homodimerization activity"/>
    <property type="evidence" value="ECO:0000314"/>
    <property type="project" value="AgBase"/>
</dbReference>
<dbReference type="GO" id="GO:0017166">
    <property type="term" value="F:vinculin binding"/>
    <property type="evidence" value="ECO:0000314"/>
    <property type="project" value="AgBase"/>
</dbReference>
<dbReference type="GO" id="GO:0030036">
    <property type="term" value="P:actin cytoskeleton organization"/>
    <property type="evidence" value="ECO:0000318"/>
    <property type="project" value="GO_Central"/>
</dbReference>
<dbReference type="GO" id="GO:0055001">
    <property type="term" value="P:muscle cell development"/>
    <property type="evidence" value="ECO:0000318"/>
    <property type="project" value="GO_Central"/>
</dbReference>
<dbReference type="GO" id="GO:0045214">
    <property type="term" value="P:sarcomere organization"/>
    <property type="evidence" value="ECO:0000315"/>
    <property type="project" value="AgBase"/>
</dbReference>
<dbReference type="GO" id="GO:0048741">
    <property type="term" value="P:skeletal muscle fiber development"/>
    <property type="evidence" value="ECO:0000315"/>
    <property type="project" value="AgBase"/>
</dbReference>
<dbReference type="CDD" id="cd21214">
    <property type="entry name" value="CH_ACTN_rpt1"/>
    <property type="match status" value="1"/>
</dbReference>
<dbReference type="CDD" id="cd21216">
    <property type="entry name" value="CH_ACTN_rpt2"/>
    <property type="match status" value="1"/>
</dbReference>
<dbReference type="CDD" id="cd00051">
    <property type="entry name" value="EFh"/>
    <property type="match status" value="1"/>
</dbReference>
<dbReference type="CDD" id="cd00176">
    <property type="entry name" value="SPEC"/>
    <property type="match status" value="2"/>
</dbReference>
<dbReference type="FunFam" id="1.10.238.10:FF:000004">
    <property type="entry name" value="Actinin alpha 1"/>
    <property type="match status" value="1"/>
</dbReference>
<dbReference type="FunFam" id="1.10.418.10:FF:000001">
    <property type="entry name" value="Actinin alpha 1"/>
    <property type="match status" value="1"/>
</dbReference>
<dbReference type="FunFam" id="1.20.58.60:FF:000004">
    <property type="entry name" value="Actinin alpha 1"/>
    <property type="match status" value="1"/>
</dbReference>
<dbReference type="FunFam" id="1.20.58.60:FF:000005">
    <property type="entry name" value="Actinin alpha 1"/>
    <property type="match status" value="1"/>
</dbReference>
<dbReference type="FunFam" id="1.10.418.10:FF:000005">
    <property type="entry name" value="Actinin alpha 4"/>
    <property type="match status" value="1"/>
</dbReference>
<dbReference type="FunFam" id="1.10.238.10:FF:000018">
    <property type="entry name" value="Actinin, alpha 1"/>
    <property type="match status" value="1"/>
</dbReference>
<dbReference type="FunFam" id="1.20.58.60:FF:000002">
    <property type="entry name" value="Actinin, alpha 1"/>
    <property type="match status" value="1"/>
</dbReference>
<dbReference type="FunFam" id="1.20.58.60:FF:000003">
    <property type="entry name" value="Actinin, alpha 1"/>
    <property type="match status" value="1"/>
</dbReference>
<dbReference type="Gene3D" id="1.20.58.60">
    <property type="match status" value="4"/>
</dbReference>
<dbReference type="Gene3D" id="1.10.418.10">
    <property type="entry name" value="Calponin-like domain"/>
    <property type="match status" value="2"/>
</dbReference>
<dbReference type="Gene3D" id="1.10.238.10">
    <property type="entry name" value="EF-hand"/>
    <property type="match status" value="2"/>
</dbReference>
<dbReference type="InterPro" id="IPR001589">
    <property type="entry name" value="Actinin_actin-bd_CS"/>
</dbReference>
<dbReference type="InterPro" id="IPR001715">
    <property type="entry name" value="CH_dom"/>
</dbReference>
<dbReference type="InterPro" id="IPR036872">
    <property type="entry name" value="CH_dom_sf"/>
</dbReference>
<dbReference type="InterPro" id="IPR011992">
    <property type="entry name" value="EF-hand-dom_pair"/>
</dbReference>
<dbReference type="InterPro" id="IPR014837">
    <property type="entry name" value="EF-hand_Ca_insen"/>
</dbReference>
<dbReference type="InterPro" id="IPR018247">
    <property type="entry name" value="EF_Hand_1_Ca_BS"/>
</dbReference>
<dbReference type="InterPro" id="IPR002048">
    <property type="entry name" value="EF_hand_dom"/>
</dbReference>
<dbReference type="InterPro" id="IPR018159">
    <property type="entry name" value="Spectrin/alpha-actinin"/>
</dbReference>
<dbReference type="InterPro" id="IPR002017">
    <property type="entry name" value="Spectrin_repeat"/>
</dbReference>
<dbReference type="PANTHER" id="PTHR11915">
    <property type="entry name" value="SPECTRIN/FILAMIN RELATED CYTOSKELETAL PROTEIN"/>
    <property type="match status" value="1"/>
</dbReference>
<dbReference type="Pfam" id="PF00307">
    <property type="entry name" value="CH"/>
    <property type="match status" value="2"/>
</dbReference>
<dbReference type="Pfam" id="PF13405">
    <property type="entry name" value="EF-hand_6"/>
    <property type="match status" value="1"/>
</dbReference>
<dbReference type="Pfam" id="PF08726">
    <property type="entry name" value="EFhand_Ca_insen"/>
    <property type="match status" value="1"/>
</dbReference>
<dbReference type="Pfam" id="PF00435">
    <property type="entry name" value="Spectrin"/>
    <property type="match status" value="4"/>
</dbReference>
<dbReference type="SMART" id="SM00033">
    <property type="entry name" value="CH"/>
    <property type="match status" value="2"/>
</dbReference>
<dbReference type="SMART" id="SM00054">
    <property type="entry name" value="EFh"/>
    <property type="match status" value="2"/>
</dbReference>
<dbReference type="SMART" id="SM01184">
    <property type="entry name" value="efhand_Ca_insen"/>
    <property type="match status" value="1"/>
</dbReference>
<dbReference type="SMART" id="SM00150">
    <property type="entry name" value="SPEC"/>
    <property type="match status" value="3"/>
</dbReference>
<dbReference type="SUPFAM" id="SSF47576">
    <property type="entry name" value="Calponin-homology domain, CH-domain"/>
    <property type="match status" value="1"/>
</dbReference>
<dbReference type="SUPFAM" id="SSF47473">
    <property type="entry name" value="EF-hand"/>
    <property type="match status" value="1"/>
</dbReference>
<dbReference type="SUPFAM" id="SSF46966">
    <property type="entry name" value="Spectrin repeat"/>
    <property type="match status" value="4"/>
</dbReference>
<dbReference type="PROSITE" id="PS00019">
    <property type="entry name" value="ACTININ_1"/>
    <property type="match status" value="1"/>
</dbReference>
<dbReference type="PROSITE" id="PS00020">
    <property type="entry name" value="ACTININ_2"/>
    <property type="match status" value="1"/>
</dbReference>
<dbReference type="PROSITE" id="PS50021">
    <property type="entry name" value="CH"/>
    <property type="match status" value="2"/>
</dbReference>
<dbReference type="PROSITE" id="PS00018">
    <property type="entry name" value="EF_HAND_1"/>
    <property type="match status" value="1"/>
</dbReference>
<dbReference type="PROSITE" id="PS50222">
    <property type="entry name" value="EF_HAND_2"/>
    <property type="match status" value="2"/>
</dbReference>
<comment type="function">
    <text>F-actin cross-linking protein is thought to anchor actin to a variety of intracellular structures. This is a bundling protein.</text>
</comment>
<comment type="subunit">
    <text evidence="2 7">Homodimer; antiparallel (By similarity). Interacts with PDLIM4 (via PDZ domain) (PubMed:14729062).</text>
</comment>
<comment type="interaction">
    <interactant intactId="EBI-5847257">
        <id>P05094</id>
    </interactant>
    <interactant intactId="EBI-5606437">
        <id>P07228</id>
        <label>ITGB1</label>
    </interactant>
    <organismsDiffer>false</organismsDiffer>
    <experiments>4</experiments>
</comment>
<comment type="interaction">
    <interactant intactId="EBI-5847257">
        <id>P05094</id>
    </interactant>
    <interactant intactId="EBI-6398041">
        <id>Q9UMF0</id>
        <label>ICAM5</label>
    </interactant>
    <organismsDiffer>true</organismsDiffer>
    <experiments>3</experiments>
</comment>
<comment type="interaction">
    <interactant intactId="EBI-5847257">
        <id>P05094</id>
    </interactant>
    <interactant intactId="EBI-702847">
        <id>P05106</id>
        <label>ITGB3</label>
    </interactant>
    <organismsDiffer>true</organismsDiffer>
    <experiments>2</experiments>
</comment>
<comment type="interaction">
    <interactant intactId="EBI-6049246">
        <id>P05094-2</id>
    </interactant>
    <interactant intactId="EBI-1039563">
        <id>P12003</id>
        <label>VCL</label>
    </interactant>
    <organismsDiffer>false</organismsDiffer>
    <experiments>5</experiments>
</comment>
<comment type="interaction">
    <interactant intactId="EBI-6049246">
        <id>P05094-2</id>
    </interactant>
    <interactant intactId="EBI-6222189">
        <id>Q04584</id>
        <label>ZYX</label>
    </interactant>
    <organismsDiffer>false</organismsDiffer>
    <experiments>4</experiments>
</comment>
<comment type="subcellular location">
    <subcellularLocation>
        <location evidence="4">Cytoplasm</location>
        <location evidence="4">Cytoskeleton</location>
    </subcellularLocation>
    <subcellularLocation>
        <location evidence="2">Cytoplasm</location>
        <location evidence="2">Myofibril</location>
        <location evidence="2">Sarcomere</location>
        <location evidence="2">Z line</location>
    </subcellularLocation>
    <subcellularLocation>
        <location evidence="4">Cell membrane</location>
    </subcellularLocation>
    <subcellularLocation>
        <location evidence="4">Cell junction</location>
    </subcellularLocation>
    <subcellularLocation>
        <location evidence="3">Cell projection</location>
        <location evidence="3">Ruffle</location>
    </subcellularLocation>
</comment>
<comment type="alternative products">
    <event type="alternative splicing"/>
    <isoform>
        <id>P05094-1</id>
        <name>1</name>
        <name>Brain</name>
        <sequence type="displayed"/>
    </isoform>
    <isoform>
        <id>P05094-2</id>
        <name>2</name>
        <name>Smooth muscle</name>
        <sequence type="described" ref="VSP_000710 VSP_000711"/>
    </isoform>
    <text>Isoforms only differ in the region of the first EF-hand calcium-binding motif.</text>
</comment>
<comment type="similarity">
    <text evidence="9">Belongs to the alpha-actinin family.</text>
</comment>
<organism>
    <name type="scientific">Gallus gallus</name>
    <name type="common">Chicken</name>
    <dbReference type="NCBI Taxonomy" id="9031"/>
    <lineage>
        <taxon>Eukaryota</taxon>
        <taxon>Metazoa</taxon>
        <taxon>Chordata</taxon>
        <taxon>Craniata</taxon>
        <taxon>Vertebrata</taxon>
        <taxon>Euteleostomi</taxon>
        <taxon>Archelosauria</taxon>
        <taxon>Archosauria</taxon>
        <taxon>Dinosauria</taxon>
        <taxon>Saurischia</taxon>
        <taxon>Theropoda</taxon>
        <taxon>Coelurosauria</taxon>
        <taxon>Aves</taxon>
        <taxon>Neognathae</taxon>
        <taxon>Galloanserae</taxon>
        <taxon>Galliformes</taxon>
        <taxon>Phasianidae</taxon>
        <taxon>Phasianinae</taxon>
        <taxon>Gallus</taxon>
    </lineage>
</organism>
<protein>
    <recommendedName>
        <fullName>Alpha-actinin-1</fullName>
    </recommendedName>
    <alternativeName>
        <fullName>Alpha-actinin cytoskeletal isoform</fullName>
    </alternativeName>
    <alternativeName>
        <fullName>F-actin cross-linking protein</fullName>
    </alternativeName>
    <alternativeName>
        <fullName>Non-muscle alpha-actinin-1</fullName>
    </alternativeName>
</protein>